<gene>
    <name type="primary">bzw2</name>
    <name evidence="1" type="synonym">5mp1</name>
    <name type="ORF">si:ch211-210b19.1</name>
    <name type="ORF">zgc:55580</name>
</gene>
<reference key="1">
    <citation type="journal article" date="2013" name="Nature">
        <title>The zebrafish reference genome sequence and its relationship to the human genome.</title>
        <authorList>
            <person name="Howe K."/>
            <person name="Clark M.D."/>
            <person name="Torroja C.F."/>
            <person name="Torrance J."/>
            <person name="Berthelot C."/>
            <person name="Muffato M."/>
            <person name="Collins J.E."/>
            <person name="Humphray S."/>
            <person name="McLaren K."/>
            <person name="Matthews L."/>
            <person name="McLaren S."/>
            <person name="Sealy I."/>
            <person name="Caccamo M."/>
            <person name="Churcher C."/>
            <person name="Scott C."/>
            <person name="Barrett J.C."/>
            <person name="Koch R."/>
            <person name="Rauch G.J."/>
            <person name="White S."/>
            <person name="Chow W."/>
            <person name="Kilian B."/>
            <person name="Quintais L.T."/>
            <person name="Guerra-Assuncao J.A."/>
            <person name="Zhou Y."/>
            <person name="Gu Y."/>
            <person name="Yen J."/>
            <person name="Vogel J.H."/>
            <person name="Eyre T."/>
            <person name="Redmond S."/>
            <person name="Banerjee R."/>
            <person name="Chi J."/>
            <person name="Fu B."/>
            <person name="Langley E."/>
            <person name="Maguire S.F."/>
            <person name="Laird G.K."/>
            <person name="Lloyd D."/>
            <person name="Kenyon E."/>
            <person name="Donaldson S."/>
            <person name="Sehra H."/>
            <person name="Almeida-King J."/>
            <person name="Loveland J."/>
            <person name="Trevanion S."/>
            <person name="Jones M."/>
            <person name="Quail M."/>
            <person name="Willey D."/>
            <person name="Hunt A."/>
            <person name="Burton J."/>
            <person name="Sims S."/>
            <person name="McLay K."/>
            <person name="Plumb B."/>
            <person name="Davis J."/>
            <person name="Clee C."/>
            <person name="Oliver K."/>
            <person name="Clark R."/>
            <person name="Riddle C."/>
            <person name="Elliot D."/>
            <person name="Threadgold G."/>
            <person name="Harden G."/>
            <person name="Ware D."/>
            <person name="Begum S."/>
            <person name="Mortimore B."/>
            <person name="Kerry G."/>
            <person name="Heath P."/>
            <person name="Phillimore B."/>
            <person name="Tracey A."/>
            <person name="Corby N."/>
            <person name="Dunn M."/>
            <person name="Johnson C."/>
            <person name="Wood J."/>
            <person name="Clark S."/>
            <person name="Pelan S."/>
            <person name="Griffiths G."/>
            <person name="Smith M."/>
            <person name="Glithero R."/>
            <person name="Howden P."/>
            <person name="Barker N."/>
            <person name="Lloyd C."/>
            <person name="Stevens C."/>
            <person name="Harley J."/>
            <person name="Holt K."/>
            <person name="Panagiotidis G."/>
            <person name="Lovell J."/>
            <person name="Beasley H."/>
            <person name="Henderson C."/>
            <person name="Gordon D."/>
            <person name="Auger K."/>
            <person name="Wright D."/>
            <person name="Collins J."/>
            <person name="Raisen C."/>
            <person name="Dyer L."/>
            <person name="Leung K."/>
            <person name="Robertson L."/>
            <person name="Ambridge K."/>
            <person name="Leongamornlert D."/>
            <person name="McGuire S."/>
            <person name="Gilderthorp R."/>
            <person name="Griffiths C."/>
            <person name="Manthravadi D."/>
            <person name="Nichol S."/>
            <person name="Barker G."/>
            <person name="Whitehead S."/>
            <person name="Kay M."/>
            <person name="Brown J."/>
            <person name="Murnane C."/>
            <person name="Gray E."/>
            <person name="Humphries M."/>
            <person name="Sycamore N."/>
            <person name="Barker D."/>
            <person name="Saunders D."/>
            <person name="Wallis J."/>
            <person name="Babbage A."/>
            <person name="Hammond S."/>
            <person name="Mashreghi-Mohammadi M."/>
            <person name="Barr L."/>
            <person name="Martin S."/>
            <person name="Wray P."/>
            <person name="Ellington A."/>
            <person name="Matthews N."/>
            <person name="Ellwood M."/>
            <person name="Woodmansey R."/>
            <person name="Clark G."/>
            <person name="Cooper J."/>
            <person name="Tromans A."/>
            <person name="Grafham D."/>
            <person name="Skuce C."/>
            <person name="Pandian R."/>
            <person name="Andrews R."/>
            <person name="Harrison E."/>
            <person name="Kimberley A."/>
            <person name="Garnett J."/>
            <person name="Fosker N."/>
            <person name="Hall R."/>
            <person name="Garner P."/>
            <person name="Kelly D."/>
            <person name="Bird C."/>
            <person name="Palmer S."/>
            <person name="Gehring I."/>
            <person name="Berger A."/>
            <person name="Dooley C.M."/>
            <person name="Ersan-Urun Z."/>
            <person name="Eser C."/>
            <person name="Geiger H."/>
            <person name="Geisler M."/>
            <person name="Karotki L."/>
            <person name="Kirn A."/>
            <person name="Konantz J."/>
            <person name="Konantz M."/>
            <person name="Oberlander M."/>
            <person name="Rudolph-Geiger S."/>
            <person name="Teucke M."/>
            <person name="Lanz C."/>
            <person name="Raddatz G."/>
            <person name="Osoegawa K."/>
            <person name="Zhu B."/>
            <person name="Rapp A."/>
            <person name="Widaa S."/>
            <person name="Langford C."/>
            <person name="Yang F."/>
            <person name="Schuster S.C."/>
            <person name="Carter N.P."/>
            <person name="Harrow J."/>
            <person name="Ning Z."/>
            <person name="Herrero J."/>
            <person name="Searle S.M."/>
            <person name="Enright A."/>
            <person name="Geisler R."/>
            <person name="Plasterk R.H."/>
            <person name="Lee C."/>
            <person name="Westerfield M."/>
            <person name="de Jong P.J."/>
            <person name="Zon L.I."/>
            <person name="Postlethwait J.H."/>
            <person name="Nusslein-Volhard C."/>
            <person name="Hubbard T.J."/>
            <person name="Roest Crollius H."/>
            <person name="Rogers J."/>
            <person name="Stemple D.L."/>
        </authorList>
    </citation>
    <scope>NUCLEOTIDE SEQUENCE [LARGE SCALE GENOMIC DNA]</scope>
    <source>
        <strain>Tuebingen</strain>
    </source>
</reference>
<reference key="2">
    <citation type="submission" date="2003-03" db="EMBL/GenBank/DDBJ databases">
        <authorList>
            <consortium name="NIH - Zebrafish Gene Collection (ZGC) project"/>
        </authorList>
    </citation>
    <scope>NUCLEOTIDE SEQUENCE [LARGE SCALE MRNA]</scope>
    <source>
        <strain>AB</strain>
    </source>
</reference>
<organism>
    <name type="scientific">Danio rerio</name>
    <name type="common">Zebrafish</name>
    <name type="synonym">Brachydanio rerio</name>
    <dbReference type="NCBI Taxonomy" id="7955"/>
    <lineage>
        <taxon>Eukaryota</taxon>
        <taxon>Metazoa</taxon>
        <taxon>Chordata</taxon>
        <taxon>Craniata</taxon>
        <taxon>Vertebrata</taxon>
        <taxon>Euteleostomi</taxon>
        <taxon>Actinopterygii</taxon>
        <taxon>Neopterygii</taxon>
        <taxon>Teleostei</taxon>
        <taxon>Ostariophysi</taxon>
        <taxon>Cypriniformes</taxon>
        <taxon>Danionidae</taxon>
        <taxon>Danioninae</taxon>
        <taxon>Danio</taxon>
    </lineage>
</organism>
<comment type="function">
    <text evidence="1">Translation initiation regulator which may repress non-AUG initiated translation and repeat-associated non-AUG (RAN) initiated translation by acting as a competitive inhibitor of eukaryotic translation initiation factor 5 (EIF5) function.</text>
</comment>
<comment type="subcellular location">
    <subcellularLocation>
        <location evidence="1">Cytoplasm</location>
    </subcellularLocation>
</comment>
<comment type="similarity">
    <text evidence="4">Belongs to the BZW family.</text>
</comment>
<dbReference type="EMBL" id="BX000986">
    <property type="protein sequence ID" value="CAK04466.1"/>
    <property type="molecule type" value="Genomic_DNA"/>
</dbReference>
<dbReference type="EMBL" id="BX957237">
    <property type="protein sequence ID" value="CAK04466.1"/>
    <property type="status" value="JOINED"/>
    <property type="molecule type" value="Genomic_DNA"/>
</dbReference>
<dbReference type="EMBL" id="BX957237">
    <property type="protein sequence ID" value="CAK10714.1"/>
    <property type="molecule type" value="Genomic_DNA"/>
</dbReference>
<dbReference type="EMBL" id="BX000986">
    <property type="protein sequence ID" value="CAK10714.1"/>
    <property type="status" value="JOINED"/>
    <property type="molecule type" value="Genomic_DNA"/>
</dbReference>
<dbReference type="EMBL" id="BX465206">
    <property type="protein sequence ID" value="CAK11358.1"/>
    <property type="molecule type" value="Genomic_DNA"/>
</dbReference>
<dbReference type="EMBL" id="BC048052">
    <property type="protein sequence ID" value="AAH48052.1"/>
    <property type="molecule type" value="mRNA"/>
</dbReference>
<dbReference type="RefSeq" id="NP_957212.1">
    <property type="nucleotide sequence ID" value="NM_200918.1"/>
</dbReference>
<dbReference type="RefSeq" id="XP_005159662.1">
    <property type="nucleotide sequence ID" value="XM_005159605.4"/>
</dbReference>
<dbReference type="RefSeq" id="XP_005159663.1">
    <property type="nucleotide sequence ID" value="XM_005159606.2"/>
</dbReference>
<dbReference type="RefSeq" id="XP_005159664.1">
    <property type="nucleotide sequence ID" value="XM_005159607.1"/>
</dbReference>
<dbReference type="RefSeq" id="XP_068071150.1">
    <property type="nucleotide sequence ID" value="XM_068215049.1"/>
</dbReference>
<dbReference type="RefSeq" id="XP_068071151.1">
    <property type="nucleotide sequence ID" value="XM_068215050.1"/>
</dbReference>
<dbReference type="RefSeq" id="XP_068071152.1">
    <property type="nucleotide sequence ID" value="XM_068215051.1"/>
</dbReference>
<dbReference type="SMR" id="Q1LUC1"/>
<dbReference type="FunCoup" id="Q1LUC1">
    <property type="interactions" value="1454"/>
</dbReference>
<dbReference type="STRING" id="7955.ENSDARP00000152624"/>
<dbReference type="PaxDb" id="7955-ENSDARP00000123337"/>
<dbReference type="Ensembl" id="ENSDART00000136213">
    <property type="protein sequence ID" value="ENSDARP00000123337"/>
    <property type="gene ID" value="ENSDARG00000035918"/>
</dbReference>
<dbReference type="Ensembl" id="ENSDART00000161882">
    <property type="protein sequence ID" value="ENSDARP00000140803"/>
    <property type="gene ID" value="ENSDARG00000035918"/>
</dbReference>
<dbReference type="Ensembl" id="ENSDART00000190949">
    <property type="protein sequence ID" value="ENSDARP00000152624"/>
    <property type="gene ID" value="ENSDARG00000035918"/>
</dbReference>
<dbReference type="GeneID" id="393892"/>
<dbReference type="KEGG" id="dre:393892"/>
<dbReference type="AGR" id="ZFIN:ZDB-GENE-040426-746"/>
<dbReference type="CTD" id="28969"/>
<dbReference type="ZFIN" id="ZDB-GENE-040426-746">
    <property type="gene designation" value="bzw2"/>
</dbReference>
<dbReference type="eggNOG" id="KOG2297">
    <property type="taxonomic scope" value="Eukaryota"/>
</dbReference>
<dbReference type="HOGENOM" id="CLU_032849_0_1_1"/>
<dbReference type="InParanoid" id="Q1LUC1"/>
<dbReference type="OMA" id="ELIQCIW"/>
<dbReference type="OrthoDB" id="1727522at2759"/>
<dbReference type="PhylomeDB" id="Q1LUC1"/>
<dbReference type="TreeFam" id="TF324313"/>
<dbReference type="PRO" id="PR:Q1LUC1"/>
<dbReference type="Proteomes" id="UP000000437">
    <property type="component" value="Chromosome 19"/>
</dbReference>
<dbReference type="Bgee" id="ENSDARG00000035918">
    <property type="expression patterns" value="Expressed in muscle tissue and 27 other cell types or tissues"/>
</dbReference>
<dbReference type="ExpressionAtlas" id="Q1LUC1">
    <property type="expression patterns" value="baseline and differential"/>
</dbReference>
<dbReference type="GO" id="GO:0005737">
    <property type="term" value="C:cytoplasm"/>
    <property type="evidence" value="ECO:0000250"/>
    <property type="project" value="UniProtKB"/>
</dbReference>
<dbReference type="GO" id="GO:0006446">
    <property type="term" value="P:regulation of translational initiation"/>
    <property type="evidence" value="ECO:0000250"/>
    <property type="project" value="UniProtKB"/>
</dbReference>
<dbReference type="CDD" id="cd11560">
    <property type="entry name" value="W2_eIF5C_like"/>
    <property type="match status" value="1"/>
</dbReference>
<dbReference type="FunFam" id="1.25.40.180:FF:000006">
    <property type="entry name" value="Basic leucine zipper and W2 domain-containing protein 1"/>
    <property type="match status" value="1"/>
</dbReference>
<dbReference type="Gene3D" id="1.25.40.180">
    <property type="match status" value="1"/>
</dbReference>
<dbReference type="InterPro" id="IPR016024">
    <property type="entry name" value="ARM-type_fold"/>
</dbReference>
<dbReference type="InterPro" id="IPR051245">
    <property type="entry name" value="eIF5-mimic_regulator"/>
</dbReference>
<dbReference type="InterPro" id="IPR043510">
    <property type="entry name" value="W2_BZW1/2"/>
</dbReference>
<dbReference type="InterPro" id="IPR003307">
    <property type="entry name" value="W2_domain"/>
</dbReference>
<dbReference type="PANTHER" id="PTHR14208">
    <property type="entry name" value="BASIC LEUCINE ZIPPER AND W2 DOMAIN-CONTAINING PROTEIN"/>
    <property type="match status" value="1"/>
</dbReference>
<dbReference type="PANTHER" id="PTHR14208:SF7">
    <property type="entry name" value="EIF5-MIMIC PROTEIN 1"/>
    <property type="match status" value="1"/>
</dbReference>
<dbReference type="Pfam" id="PF25504">
    <property type="entry name" value="HEAT_5MP1_2"/>
    <property type="match status" value="1"/>
</dbReference>
<dbReference type="Pfam" id="PF02020">
    <property type="entry name" value="W2"/>
    <property type="match status" value="1"/>
</dbReference>
<dbReference type="SMART" id="SM00515">
    <property type="entry name" value="eIF5C"/>
    <property type="match status" value="1"/>
</dbReference>
<dbReference type="SUPFAM" id="SSF48371">
    <property type="entry name" value="ARM repeat"/>
    <property type="match status" value="1"/>
</dbReference>
<dbReference type="PROSITE" id="PS51363">
    <property type="entry name" value="W2"/>
    <property type="match status" value="1"/>
</dbReference>
<proteinExistence type="evidence at transcript level"/>
<feature type="chain" id="PRO_0000254624" description="eIF5-mimic protein 1">
    <location>
        <begin position="1"/>
        <end position="421"/>
    </location>
</feature>
<feature type="domain" description="W2" evidence="2">
    <location>
        <begin position="250"/>
        <end position="417"/>
    </location>
</feature>
<feature type="region of interest" description="Disordered" evidence="3">
    <location>
        <begin position="1"/>
        <end position="24"/>
    </location>
</feature>
<feature type="sequence conflict" description="In Ref. 2; AAH48052." evidence="4" ref="2">
    <original>F</original>
    <variation>L</variation>
    <location>
        <position position="141"/>
    </location>
</feature>
<protein>
    <recommendedName>
        <fullName evidence="1">eIF5-mimic protein 1</fullName>
    </recommendedName>
    <alternativeName>
        <fullName>Basic leucine zipper and W2 domain-containing protein 2</fullName>
    </alternativeName>
</protein>
<sequence length="421" mass="48325">MNTGKQQKPVLTGQRFKTRKRDEKEKFEPTVFRDTIVQGLNEAGGDLDALAKFLDVTGSRLDYRRYADTLFDILIAGSMLAPGGTRIDDADKTKVTQHCVFNAEENHTTIRSYAQVFNKLIRRYKYLEKAFEEEIKKLLLFLKGFTESEQTKLAMLTGVLLANGTLPPPILTSLFSDNLVKEGISASFAVKMFKAWIAEKDANAVTSALRKANLDKKLLELFPANKQNVEHFTKFFTEAGLKELSDFLRTQQTLGTRKELQKELQERLSQQCPIREIVVYVKEEMKKNDLQEQAVIGLLWTCLMNAVEWNKKEELVTEQALKHLKHYAPLLAVFSTQGQSELVLLLKIQEYCYDNIHFMKSFSKIVVLFYKADVVSEEAIMKWYKDAHAAKGKSVFLEQMKKFVEWLQNAEEESESEGEED</sequence>
<evidence type="ECO:0000250" key="1">
    <source>
        <dbReference type="UniProtKB" id="Q9Y6E2"/>
    </source>
</evidence>
<evidence type="ECO:0000255" key="2">
    <source>
        <dbReference type="PROSITE-ProRule" id="PRU00695"/>
    </source>
</evidence>
<evidence type="ECO:0000256" key="3">
    <source>
        <dbReference type="SAM" id="MobiDB-lite"/>
    </source>
</evidence>
<evidence type="ECO:0000305" key="4"/>
<accession>Q1LUC1</accession>
<accession>Q7ZUN5</accession>
<name>5MP1_DANRE</name>
<keyword id="KW-0963">Cytoplasm</keyword>
<keyword id="KW-1185">Reference proteome</keyword>
<keyword id="KW-0810">Translation regulation</keyword>